<sequence>MPKPINVRVTTMDAELEFAIQPNTTGKQLFDQVVKTIGLREVWYFGLQYVDNKGFPTWLKLDKKVSAQEVRKENPVQFKFRAKFYPEDVADELIQDITQKLFFLQVKEGILSDEIYCPPETAVLLGSYAVQAKFGDYNKEMHKSGYLSSERLIPQRVMDQHKLSRDQWEDRIQVWHAEHRGMLKDSAMLEYLKIAQDLEMYGINYFEIKNKKGTDLWLGVDALGLNIYEKDDKLTPKIGFPWSEIRNISFNDKKFVIKPIDKKAPDFVFYAPRLRINKRILQLCMGNHELYMRRRKPDTIEVQQMKAQAREEKHQKQLERQQLETEKKRRETVEREKEQMLREKEELMLRLQDFEQKTKRAEKELSEQIEKALQLEEERRRAQEEAERLEADRMAALRAKEELERQAQDQIKSQEQLAAELAEYTAKIALLEEARRRKEDEVEEWQHRAKEAQDDLVKTKEELHLVMTAPPPPPPPVYEPVNYHVQEGLQDEGAEPMGYSAELSSEGILDDRNEEKRITEAEKNERVQRQLLTLSNELSQARDENKRTHNDIIHNENMRQGRDKYKTLRQIRQGNTKQRIDEFEAM</sequence>
<keyword id="KW-0007">Acetylation</keyword>
<keyword id="KW-1003">Cell membrane</keyword>
<keyword id="KW-0966">Cell projection</keyword>
<keyword id="KW-0133">Cell shape</keyword>
<keyword id="KW-0175">Coiled coil</keyword>
<keyword id="KW-0963">Cytoplasm</keyword>
<keyword id="KW-0206">Cytoskeleton</keyword>
<keyword id="KW-0903">Direct protein sequencing</keyword>
<keyword id="KW-0472">Membrane</keyword>
<keyword id="KW-0597">Phosphoprotein</keyword>
<keyword id="KW-1185">Reference proteome</keyword>
<keyword id="KW-0702">S-nitrosylation</keyword>
<proteinExistence type="evidence at protein level"/>
<accession>P31977</accession>
<accession>Q5WQV4</accession>
<accession>Q66H97</accession>
<accession>Q8VHK3</accession>
<feature type="chain" id="PRO_0000219411" description="Ezrin">
    <location>
        <begin position="1"/>
        <end position="586"/>
    </location>
</feature>
<feature type="domain" description="FERM" evidence="7">
    <location>
        <begin position="2"/>
        <end position="295"/>
    </location>
</feature>
<feature type="region of interest" description="Interaction with SCYL3" evidence="1">
    <location>
        <begin position="244"/>
        <end position="586"/>
    </location>
</feature>
<feature type="region of interest" description="Disordered" evidence="8">
    <location>
        <begin position="306"/>
        <end position="338"/>
    </location>
</feature>
<feature type="coiled-coil region" evidence="6">
    <location>
        <begin position="302"/>
        <end position="462"/>
    </location>
</feature>
<feature type="short sequence motif" description="[IL]-x-C-x-x-[DE] motif" evidence="2">
    <location>
        <begin position="115"/>
        <end position="120"/>
    </location>
</feature>
<feature type="compositionally biased region" description="Basic and acidic residues" evidence="8">
    <location>
        <begin position="308"/>
        <end position="338"/>
    </location>
</feature>
<feature type="modified residue" description="N6-acetyllysine" evidence="2">
    <location>
        <position position="60"/>
    </location>
</feature>
<feature type="modified residue" description="Phosphotyrosine; by PDGFR" evidence="2">
    <location>
        <position position="146"/>
    </location>
</feature>
<feature type="modified residue" description="Phosphoserine" evidence="2">
    <location>
        <position position="366"/>
    </location>
</feature>
<feature type="modified residue" description="Phosphotyrosine" evidence="2">
    <location>
        <position position="478"/>
    </location>
</feature>
<feature type="modified residue" description="Phosphoserine" evidence="14">
    <location>
        <position position="535"/>
    </location>
</feature>
<feature type="modified residue" description="Phosphothreonine; by ROCK2 and PKC/PRKCI" evidence="2">
    <location>
        <position position="567"/>
    </location>
</feature>
<feature type="sequence conflict" description="In Ref. 3; AAL47844." evidence="13" ref="3">
    <original>D</original>
    <variation>E</variation>
    <location>
        <position position="455"/>
    </location>
</feature>
<feature type="sequence conflict" description="In Ref. 4; CAA48004." evidence="13" ref="4">
    <original>L</original>
    <variation>P</variation>
    <location>
        <position position="531"/>
    </location>
</feature>
<feature type="sequence conflict" description="In Ref. 1; AAR91694." evidence="13" ref="1">
    <original>L</original>
    <variation>Q</variation>
    <location>
        <position position="532"/>
    </location>
</feature>
<organism>
    <name type="scientific">Rattus norvegicus</name>
    <name type="common">Rat</name>
    <dbReference type="NCBI Taxonomy" id="10116"/>
    <lineage>
        <taxon>Eukaryota</taxon>
        <taxon>Metazoa</taxon>
        <taxon>Chordata</taxon>
        <taxon>Craniata</taxon>
        <taxon>Vertebrata</taxon>
        <taxon>Euteleostomi</taxon>
        <taxon>Mammalia</taxon>
        <taxon>Eutheria</taxon>
        <taxon>Euarchontoglires</taxon>
        <taxon>Glires</taxon>
        <taxon>Rodentia</taxon>
        <taxon>Myomorpha</taxon>
        <taxon>Muroidea</taxon>
        <taxon>Muridae</taxon>
        <taxon>Murinae</taxon>
        <taxon>Rattus</taxon>
    </lineage>
</organism>
<dbReference type="EMBL" id="AY428869">
    <property type="protein sequence ID" value="AAR91694.1"/>
    <property type="molecule type" value="mRNA"/>
</dbReference>
<dbReference type="EMBL" id="BC081958">
    <property type="protein sequence ID" value="AAH81958.1"/>
    <property type="molecule type" value="mRNA"/>
</dbReference>
<dbReference type="EMBL" id="AF450298">
    <property type="protein sequence ID" value="AAL47844.1"/>
    <property type="molecule type" value="mRNA"/>
</dbReference>
<dbReference type="EMBL" id="X67788">
    <property type="protein sequence ID" value="CAA48004.1"/>
    <property type="molecule type" value="mRNA"/>
</dbReference>
<dbReference type="PIR" id="S58759">
    <property type="entry name" value="S58759"/>
</dbReference>
<dbReference type="RefSeq" id="NP_062230.1">
    <property type="nucleotide sequence ID" value="NM_019357.1"/>
</dbReference>
<dbReference type="BMRB" id="P31977"/>
<dbReference type="SMR" id="P31977"/>
<dbReference type="BioGRID" id="248535">
    <property type="interactions" value="2"/>
</dbReference>
<dbReference type="CORUM" id="P31977"/>
<dbReference type="FunCoup" id="P31977">
    <property type="interactions" value="2426"/>
</dbReference>
<dbReference type="IntAct" id="P31977">
    <property type="interactions" value="3"/>
</dbReference>
<dbReference type="STRING" id="10116.ENSRNOP00000046593"/>
<dbReference type="GlyGen" id="P31977">
    <property type="glycosylation" value="1 site, 1 O-linked glycan (1 site)"/>
</dbReference>
<dbReference type="iPTMnet" id="P31977"/>
<dbReference type="PhosphoSitePlus" id="P31977"/>
<dbReference type="jPOST" id="P31977"/>
<dbReference type="PaxDb" id="10116-ENSRNOP00000046593"/>
<dbReference type="Ensembl" id="ENSRNOT00000046746.4">
    <property type="protein sequence ID" value="ENSRNOP00000046593.2"/>
    <property type="gene ID" value="ENSRNOG00000018524.7"/>
</dbReference>
<dbReference type="GeneID" id="54319"/>
<dbReference type="KEGG" id="rno:54319"/>
<dbReference type="AGR" id="RGD:621161"/>
<dbReference type="CTD" id="7430"/>
<dbReference type="RGD" id="621161">
    <property type="gene designation" value="Ezr"/>
</dbReference>
<dbReference type="eggNOG" id="KOG3529">
    <property type="taxonomic scope" value="Eukaryota"/>
</dbReference>
<dbReference type="GeneTree" id="ENSGT01090000260082"/>
<dbReference type="HOGENOM" id="CLU_003623_6_2_1"/>
<dbReference type="InParanoid" id="P31977"/>
<dbReference type="OrthoDB" id="53014at9989"/>
<dbReference type="PhylomeDB" id="P31977"/>
<dbReference type="TreeFam" id="TF313935"/>
<dbReference type="Reactome" id="R-RNO-373752">
    <property type="pathway name" value="Netrin-1 signaling"/>
</dbReference>
<dbReference type="Reactome" id="R-RNO-437239">
    <property type="pathway name" value="Recycling pathway of L1"/>
</dbReference>
<dbReference type="PRO" id="PR:P31977"/>
<dbReference type="Proteomes" id="UP000002494">
    <property type="component" value="Chromosome 1"/>
</dbReference>
<dbReference type="Bgee" id="ENSRNOG00000018524">
    <property type="expression patterns" value="Expressed in stomach and 19 other cell types or tissues"/>
</dbReference>
<dbReference type="ExpressionAtlas" id="P31977">
    <property type="expression patterns" value="baseline and differential"/>
</dbReference>
<dbReference type="GO" id="GO:0015629">
    <property type="term" value="C:actin cytoskeleton"/>
    <property type="evidence" value="ECO:0000250"/>
    <property type="project" value="UniProtKB"/>
</dbReference>
<dbReference type="GO" id="GO:0005884">
    <property type="term" value="C:actin filament"/>
    <property type="evidence" value="ECO:0000250"/>
    <property type="project" value="UniProtKB"/>
</dbReference>
<dbReference type="GO" id="GO:0005912">
    <property type="term" value="C:adherens junction"/>
    <property type="evidence" value="ECO:0000318"/>
    <property type="project" value="GO_Central"/>
</dbReference>
<dbReference type="GO" id="GO:0045177">
    <property type="term" value="C:apical part of cell"/>
    <property type="evidence" value="ECO:0000266"/>
    <property type="project" value="RGD"/>
</dbReference>
<dbReference type="GO" id="GO:0016324">
    <property type="term" value="C:apical plasma membrane"/>
    <property type="evidence" value="ECO:0000314"/>
    <property type="project" value="UniProtKB"/>
</dbReference>
<dbReference type="GO" id="GO:0097449">
    <property type="term" value="C:astrocyte projection"/>
    <property type="evidence" value="ECO:0000314"/>
    <property type="project" value="RGD"/>
</dbReference>
<dbReference type="GO" id="GO:0016323">
    <property type="term" value="C:basolateral plasma membrane"/>
    <property type="evidence" value="ECO:0000314"/>
    <property type="project" value="UniProtKB"/>
</dbReference>
<dbReference type="GO" id="GO:0005903">
    <property type="term" value="C:brush border"/>
    <property type="evidence" value="ECO:0000266"/>
    <property type="project" value="RGD"/>
</dbReference>
<dbReference type="GO" id="GO:0044297">
    <property type="term" value="C:cell body"/>
    <property type="evidence" value="ECO:0000314"/>
    <property type="project" value="RGD"/>
</dbReference>
<dbReference type="GO" id="GO:0005938">
    <property type="term" value="C:cell cortex"/>
    <property type="evidence" value="ECO:0007669"/>
    <property type="project" value="UniProtKB-SubCell"/>
</dbReference>
<dbReference type="GO" id="GO:0071944">
    <property type="term" value="C:cell periphery"/>
    <property type="evidence" value="ECO:0000266"/>
    <property type="project" value="RGD"/>
</dbReference>
<dbReference type="GO" id="GO:0042995">
    <property type="term" value="C:cell projection"/>
    <property type="evidence" value="ECO:0000266"/>
    <property type="project" value="RGD"/>
</dbReference>
<dbReference type="GO" id="GO:0051286">
    <property type="term" value="C:cell tip"/>
    <property type="evidence" value="ECO:0000314"/>
    <property type="project" value="RGD"/>
</dbReference>
<dbReference type="GO" id="GO:0036064">
    <property type="term" value="C:ciliary basal body"/>
    <property type="evidence" value="ECO:0000266"/>
    <property type="project" value="RGD"/>
</dbReference>
<dbReference type="GO" id="GO:0005737">
    <property type="term" value="C:cytoplasm"/>
    <property type="evidence" value="ECO:0000266"/>
    <property type="project" value="RGD"/>
</dbReference>
<dbReference type="GO" id="GO:0005829">
    <property type="term" value="C:cytosol"/>
    <property type="evidence" value="ECO:0000266"/>
    <property type="project" value="RGD"/>
</dbReference>
<dbReference type="GO" id="GO:0005768">
    <property type="term" value="C:endosome"/>
    <property type="evidence" value="ECO:0000266"/>
    <property type="project" value="RGD"/>
</dbReference>
<dbReference type="GO" id="GO:0030175">
    <property type="term" value="C:filopodium"/>
    <property type="evidence" value="ECO:0000314"/>
    <property type="project" value="RGD"/>
</dbReference>
<dbReference type="GO" id="GO:0005925">
    <property type="term" value="C:focal adhesion"/>
    <property type="evidence" value="ECO:0000266"/>
    <property type="project" value="RGD"/>
</dbReference>
<dbReference type="GO" id="GO:0001772">
    <property type="term" value="C:immunological synapse"/>
    <property type="evidence" value="ECO:0000266"/>
    <property type="project" value="RGD"/>
</dbReference>
<dbReference type="GO" id="GO:0044393">
    <property type="term" value="C:microspike"/>
    <property type="evidence" value="ECO:0000314"/>
    <property type="project" value="RGD"/>
</dbReference>
<dbReference type="GO" id="GO:0005902">
    <property type="term" value="C:microvillus"/>
    <property type="evidence" value="ECO:0000266"/>
    <property type="project" value="RGD"/>
</dbReference>
<dbReference type="GO" id="GO:0031528">
    <property type="term" value="C:microvillus membrane"/>
    <property type="evidence" value="ECO:0000314"/>
    <property type="project" value="UniProtKB"/>
</dbReference>
<dbReference type="GO" id="GO:0048471">
    <property type="term" value="C:perinuclear region of cytoplasm"/>
    <property type="evidence" value="ECO:0000266"/>
    <property type="project" value="RGD"/>
</dbReference>
<dbReference type="GO" id="GO:0005886">
    <property type="term" value="C:plasma membrane"/>
    <property type="evidence" value="ECO:0000250"/>
    <property type="project" value="UniProtKB"/>
</dbReference>
<dbReference type="GO" id="GO:0044853">
    <property type="term" value="C:plasma membrane raft"/>
    <property type="evidence" value="ECO:0000266"/>
    <property type="project" value="RGD"/>
</dbReference>
<dbReference type="GO" id="GO:0032991">
    <property type="term" value="C:protein-containing complex"/>
    <property type="evidence" value="ECO:0000266"/>
    <property type="project" value="RGD"/>
</dbReference>
<dbReference type="GO" id="GO:0001726">
    <property type="term" value="C:ruffle"/>
    <property type="evidence" value="ECO:0000266"/>
    <property type="project" value="RGD"/>
</dbReference>
<dbReference type="GO" id="GO:0032587">
    <property type="term" value="C:ruffle membrane"/>
    <property type="evidence" value="ECO:0007669"/>
    <property type="project" value="UniProtKB-SubCell"/>
</dbReference>
<dbReference type="GO" id="GO:0097454">
    <property type="term" value="C:Schwann cell microvillus"/>
    <property type="evidence" value="ECO:0000314"/>
    <property type="project" value="RGD"/>
</dbReference>
<dbReference type="GO" id="GO:0030315">
    <property type="term" value="C:T-tubule"/>
    <property type="evidence" value="ECO:0000314"/>
    <property type="project" value="RGD"/>
</dbReference>
<dbReference type="GO" id="GO:0001931">
    <property type="term" value="C:uropod"/>
    <property type="evidence" value="ECO:0000266"/>
    <property type="project" value="RGD"/>
</dbReference>
<dbReference type="GO" id="GO:0003779">
    <property type="term" value="F:actin binding"/>
    <property type="evidence" value="ECO:0000266"/>
    <property type="project" value="RGD"/>
</dbReference>
<dbReference type="GO" id="GO:0051015">
    <property type="term" value="F:actin filament binding"/>
    <property type="evidence" value="ECO:0000250"/>
    <property type="project" value="UniProtKB"/>
</dbReference>
<dbReference type="GO" id="GO:0051117">
    <property type="term" value="F:ATPase binding"/>
    <property type="evidence" value="ECO:0000266"/>
    <property type="project" value="RGD"/>
</dbReference>
<dbReference type="GO" id="GO:0050839">
    <property type="term" value="F:cell adhesion molecule binding"/>
    <property type="evidence" value="ECO:0000250"/>
    <property type="project" value="UniProtKB"/>
</dbReference>
<dbReference type="GO" id="GO:0097718">
    <property type="term" value="F:disordered domain specific binding"/>
    <property type="evidence" value="ECO:0000266"/>
    <property type="project" value="RGD"/>
</dbReference>
<dbReference type="GO" id="GO:0042802">
    <property type="term" value="F:identical protein binding"/>
    <property type="evidence" value="ECO:0000266"/>
    <property type="project" value="RGD"/>
</dbReference>
<dbReference type="GO" id="GO:0008017">
    <property type="term" value="F:microtubule binding"/>
    <property type="evidence" value="ECO:0000266"/>
    <property type="project" value="RGD"/>
</dbReference>
<dbReference type="GO" id="GO:0019904">
    <property type="term" value="F:protein domain specific binding"/>
    <property type="evidence" value="ECO:0000353"/>
    <property type="project" value="RGD"/>
</dbReference>
<dbReference type="GO" id="GO:0051018">
    <property type="term" value="F:protein kinase A binding"/>
    <property type="evidence" value="ECO:0000266"/>
    <property type="project" value="RGD"/>
</dbReference>
<dbReference type="GO" id="GO:0034236">
    <property type="term" value="F:protein kinase A catalytic subunit binding"/>
    <property type="evidence" value="ECO:0000266"/>
    <property type="project" value="RGD"/>
</dbReference>
<dbReference type="GO" id="GO:0034237">
    <property type="term" value="F:protein kinase A regulatory subunit binding"/>
    <property type="evidence" value="ECO:0000266"/>
    <property type="project" value="RGD"/>
</dbReference>
<dbReference type="GO" id="GO:0044877">
    <property type="term" value="F:protein-containing complex binding"/>
    <property type="evidence" value="ECO:0000353"/>
    <property type="project" value="RGD"/>
</dbReference>
<dbReference type="GO" id="GO:0044548">
    <property type="term" value="F:S100 protein binding"/>
    <property type="evidence" value="ECO:0000266"/>
    <property type="project" value="RGD"/>
</dbReference>
<dbReference type="GO" id="GO:0005198">
    <property type="term" value="F:structural molecule activity"/>
    <property type="evidence" value="ECO:0000304"/>
    <property type="project" value="RGD"/>
</dbReference>
<dbReference type="GO" id="GO:0030036">
    <property type="term" value="P:actin cytoskeleton organization"/>
    <property type="evidence" value="ECO:0000266"/>
    <property type="project" value="RGD"/>
</dbReference>
<dbReference type="GO" id="GO:0051017">
    <property type="term" value="P:actin filament bundle assembly"/>
    <property type="evidence" value="ECO:0000250"/>
    <property type="project" value="UniProtKB"/>
</dbReference>
<dbReference type="GO" id="GO:0030953">
    <property type="term" value="P:astral microtubule organization"/>
    <property type="evidence" value="ECO:0000266"/>
    <property type="project" value="RGD"/>
</dbReference>
<dbReference type="GO" id="GO:0071320">
    <property type="term" value="P:cellular response to cAMP"/>
    <property type="evidence" value="ECO:0000266"/>
    <property type="project" value="RGD"/>
</dbReference>
<dbReference type="GO" id="GO:0043622">
    <property type="term" value="P:cortical microtubule organization"/>
    <property type="evidence" value="ECO:0000266"/>
    <property type="project" value="RGD"/>
</dbReference>
<dbReference type="GO" id="GO:0030855">
    <property type="term" value="P:epithelial cell differentiation"/>
    <property type="evidence" value="ECO:0000270"/>
    <property type="project" value="RGD"/>
</dbReference>
<dbReference type="GO" id="GO:0051660">
    <property type="term" value="P:establishment of centrosome localization"/>
    <property type="evidence" value="ECO:0000266"/>
    <property type="project" value="RGD"/>
</dbReference>
<dbReference type="GO" id="GO:0061028">
    <property type="term" value="P:establishment of endothelial barrier"/>
    <property type="evidence" value="ECO:0000266"/>
    <property type="project" value="RGD"/>
</dbReference>
<dbReference type="GO" id="GO:0035088">
    <property type="term" value="P:establishment or maintenance of apical/basal cell polarity"/>
    <property type="evidence" value="ECO:0000266"/>
    <property type="project" value="RGD"/>
</dbReference>
<dbReference type="GO" id="GO:0046847">
    <property type="term" value="P:filopodium assembly"/>
    <property type="evidence" value="ECO:0000315"/>
    <property type="project" value="RGD"/>
</dbReference>
<dbReference type="GO" id="GO:0001951">
    <property type="term" value="P:intestinal D-glucose absorption"/>
    <property type="evidence" value="ECO:0000266"/>
    <property type="project" value="RGD"/>
</dbReference>
<dbReference type="GO" id="GO:0007159">
    <property type="term" value="P:leukocyte cell-cell adhesion"/>
    <property type="evidence" value="ECO:0000266"/>
    <property type="project" value="RGD"/>
</dbReference>
<dbReference type="GO" id="GO:0022614">
    <property type="term" value="P:membrane to membrane docking"/>
    <property type="evidence" value="ECO:0000266"/>
    <property type="project" value="RGD"/>
</dbReference>
<dbReference type="GO" id="GO:0030033">
    <property type="term" value="P:microvillus assembly"/>
    <property type="evidence" value="ECO:0000266"/>
    <property type="project" value="RGD"/>
</dbReference>
<dbReference type="GO" id="GO:0070373">
    <property type="term" value="P:negative regulation of ERK1 and ERK2 cascade"/>
    <property type="evidence" value="ECO:0000266"/>
    <property type="project" value="RGD"/>
</dbReference>
<dbReference type="GO" id="GO:0032703">
    <property type="term" value="P:negative regulation of interleukin-2 production"/>
    <property type="evidence" value="ECO:0000266"/>
    <property type="project" value="RGD"/>
</dbReference>
<dbReference type="GO" id="GO:1903753">
    <property type="term" value="P:negative regulation of p38MAPK cascade"/>
    <property type="evidence" value="ECO:0000266"/>
    <property type="project" value="RGD"/>
</dbReference>
<dbReference type="GO" id="GO:0050860">
    <property type="term" value="P:negative regulation of T cell receptor signaling pathway"/>
    <property type="evidence" value="ECO:0000266"/>
    <property type="project" value="RGD"/>
</dbReference>
<dbReference type="GO" id="GO:0000122">
    <property type="term" value="P:negative regulation of transcription by RNA polymerase II"/>
    <property type="evidence" value="ECO:0000266"/>
    <property type="project" value="RGD"/>
</dbReference>
<dbReference type="GO" id="GO:2000643">
    <property type="term" value="P:positive regulation of early endosome to late endosome transport"/>
    <property type="evidence" value="ECO:0000266"/>
    <property type="project" value="RGD"/>
</dbReference>
<dbReference type="GO" id="GO:0010628">
    <property type="term" value="P:positive regulation of gene expression"/>
    <property type="evidence" value="ECO:0000266"/>
    <property type="project" value="RGD"/>
</dbReference>
<dbReference type="GO" id="GO:0040018">
    <property type="term" value="P:positive regulation of multicellular organism growth"/>
    <property type="evidence" value="ECO:0000266"/>
    <property type="project" value="RGD"/>
</dbReference>
<dbReference type="GO" id="GO:0045732">
    <property type="term" value="P:positive regulation of protein catabolic process"/>
    <property type="evidence" value="ECO:0000266"/>
    <property type="project" value="RGD"/>
</dbReference>
<dbReference type="GO" id="GO:1902966">
    <property type="term" value="P:positive regulation of protein localization to early endosome"/>
    <property type="evidence" value="ECO:0000266"/>
    <property type="project" value="RGD"/>
</dbReference>
<dbReference type="GO" id="GO:1903078">
    <property type="term" value="P:positive regulation of protein localization to plasma membrane"/>
    <property type="evidence" value="ECO:0000266"/>
    <property type="project" value="RGD"/>
</dbReference>
<dbReference type="GO" id="GO:0098974">
    <property type="term" value="P:postsynaptic actin cytoskeleton organization"/>
    <property type="evidence" value="ECO:0000266"/>
    <property type="project" value="RGD"/>
</dbReference>
<dbReference type="GO" id="GO:0010737">
    <property type="term" value="P:protein kinase A signaling"/>
    <property type="evidence" value="ECO:0000266"/>
    <property type="project" value="RGD"/>
</dbReference>
<dbReference type="GO" id="GO:0072697">
    <property type="term" value="P:protein localization to cell cortex"/>
    <property type="evidence" value="ECO:0000266"/>
    <property type="project" value="RGD"/>
</dbReference>
<dbReference type="GO" id="GO:0072659">
    <property type="term" value="P:protein localization to plasma membrane"/>
    <property type="evidence" value="ECO:0000266"/>
    <property type="project" value="RGD"/>
</dbReference>
<dbReference type="GO" id="GO:0031503">
    <property type="term" value="P:protein-containing complex localization"/>
    <property type="evidence" value="ECO:0000266"/>
    <property type="project" value="RGD"/>
</dbReference>
<dbReference type="GO" id="GO:0031623">
    <property type="term" value="P:receptor internalization"/>
    <property type="evidence" value="ECO:0000266"/>
    <property type="project" value="RGD"/>
</dbReference>
<dbReference type="GO" id="GO:0008360">
    <property type="term" value="P:regulation of cell shape"/>
    <property type="evidence" value="ECO:0000266"/>
    <property type="project" value="RGD"/>
</dbReference>
<dbReference type="GO" id="GO:0032532">
    <property type="term" value="P:regulation of microvillus length"/>
    <property type="evidence" value="ECO:0000266"/>
    <property type="project" value="RGD"/>
</dbReference>
<dbReference type="GO" id="GO:1902115">
    <property type="term" value="P:regulation of organelle assembly"/>
    <property type="evidence" value="ECO:0000266"/>
    <property type="project" value="RGD"/>
</dbReference>
<dbReference type="GO" id="GO:0003376">
    <property type="term" value="P:sphingosine-1-phosphate receptor signaling pathway"/>
    <property type="evidence" value="ECO:0000266"/>
    <property type="project" value="RGD"/>
</dbReference>
<dbReference type="GO" id="GO:1902896">
    <property type="term" value="P:terminal web assembly"/>
    <property type="evidence" value="ECO:0000266"/>
    <property type="project" value="RGD"/>
</dbReference>
<dbReference type="CDD" id="cd14473">
    <property type="entry name" value="FERM_B-lobe"/>
    <property type="match status" value="1"/>
</dbReference>
<dbReference type="CDD" id="cd13194">
    <property type="entry name" value="FERM_C_ERM"/>
    <property type="match status" value="1"/>
</dbReference>
<dbReference type="CDD" id="cd17239">
    <property type="entry name" value="FERM_F1_Ezrin"/>
    <property type="match status" value="1"/>
</dbReference>
<dbReference type="FunFam" id="2.30.29.30:FF:000003">
    <property type="entry name" value="Radixin isoform 1"/>
    <property type="match status" value="1"/>
</dbReference>
<dbReference type="FunFam" id="1.20.80.10:FF:000002">
    <property type="entry name" value="radixin isoform X1"/>
    <property type="match status" value="1"/>
</dbReference>
<dbReference type="FunFam" id="3.10.20.90:FF:000013">
    <property type="entry name" value="radixin isoform X1"/>
    <property type="match status" value="1"/>
</dbReference>
<dbReference type="FunFam" id="1.20.5.450:FF:000001">
    <property type="entry name" value="radixin isoform X2"/>
    <property type="match status" value="1"/>
</dbReference>
<dbReference type="Gene3D" id="1.20.5.450">
    <property type="match status" value="1"/>
</dbReference>
<dbReference type="Gene3D" id="1.20.80.10">
    <property type="match status" value="1"/>
</dbReference>
<dbReference type="Gene3D" id="6.10.360.10">
    <property type="match status" value="1"/>
</dbReference>
<dbReference type="Gene3D" id="3.10.20.90">
    <property type="entry name" value="Phosphatidylinositol 3-kinase Catalytic Subunit, Chain A, domain 1"/>
    <property type="match status" value="1"/>
</dbReference>
<dbReference type="Gene3D" id="2.30.29.30">
    <property type="entry name" value="Pleckstrin-homology domain (PH domain)/Phosphotyrosine-binding domain (PTB)"/>
    <property type="match status" value="1"/>
</dbReference>
<dbReference type="InterPro" id="IPR019749">
    <property type="entry name" value="Band_41_domain"/>
</dbReference>
<dbReference type="InterPro" id="IPR011174">
    <property type="entry name" value="ERM"/>
</dbReference>
<dbReference type="InterPro" id="IPR011259">
    <property type="entry name" value="ERM_C_dom"/>
</dbReference>
<dbReference type="InterPro" id="IPR041789">
    <property type="entry name" value="ERM_FERM_C"/>
</dbReference>
<dbReference type="InterPro" id="IPR046810">
    <property type="entry name" value="ERM_helical"/>
</dbReference>
<dbReference type="InterPro" id="IPR000798">
    <property type="entry name" value="Ez/rad/moesin-like"/>
</dbReference>
<dbReference type="InterPro" id="IPR014352">
    <property type="entry name" value="FERM/acyl-CoA-bd_prot_sf"/>
</dbReference>
<dbReference type="InterPro" id="IPR035963">
    <property type="entry name" value="FERM_2"/>
</dbReference>
<dbReference type="InterPro" id="IPR019748">
    <property type="entry name" value="FERM_central"/>
</dbReference>
<dbReference type="InterPro" id="IPR019747">
    <property type="entry name" value="FERM_CS"/>
</dbReference>
<dbReference type="InterPro" id="IPR000299">
    <property type="entry name" value="FERM_domain"/>
</dbReference>
<dbReference type="InterPro" id="IPR018979">
    <property type="entry name" value="FERM_N"/>
</dbReference>
<dbReference type="InterPro" id="IPR018980">
    <property type="entry name" value="FERM_PH-like_C"/>
</dbReference>
<dbReference type="InterPro" id="IPR008954">
    <property type="entry name" value="Moesin_tail_sf"/>
</dbReference>
<dbReference type="InterPro" id="IPR011993">
    <property type="entry name" value="PH-like_dom_sf"/>
</dbReference>
<dbReference type="InterPro" id="IPR029071">
    <property type="entry name" value="Ubiquitin-like_domsf"/>
</dbReference>
<dbReference type="PANTHER" id="PTHR23281">
    <property type="entry name" value="MERLIN/MOESIN/EZRIN/RADIXIN"/>
    <property type="match status" value="1"/>
</dbReference>
<dbReference type="Pfam" id="PF00769">
    <property type="entry name" value="ERM_C"/>
    <property type="match status" value="1"/>
</dbReference>
<dbReference type="Pfam" id="PF20492">
    <property type="entry name" value="ERM_helical"/>
    <property type="match status" value="1"/>
</dbReference>
<dbReference type="Pfam" id="PF09380">
    <property type="entry name" value="FERM_C"/>
    <property type="match status" value="1"/>
</dbReference>
<dbReference type="Pfam" id="PF00373">
    <property type="entry name" value="FERM_M"/>
    <property type="match status" value="1"/>
</dbReference>
<dbReference type="Pfam" id="PF09379">
    <property type="entry name" value="FERM_N"/>
    <property type="match status" value="1"/>
</dbReference>
<dbReference type="PIRSF" id="PIRSF002305">
    <property type="entry name" value="ERM"/>
    <property type="match status" value="1"/>
</dbReference>
<dbReference type="PRINTS" id="PR00935">
    <property type="entry name" value="BAND41"/>
</dbReference>
<dbReference type="PRINTS" id="PR00661">
    <property type="entry name" value="ERMFAMILY"/>
</dbReference>
<dbReference type="SMART" id="SM00295">
    <property type="entry name" value="B41"/>
    <property type="match status" value="1"/>
</dbReference>
<dbReference type="SMART" id="SM01196">
    <property type="entry name" value="FERM_C"/>
    <property type="match status" value="1"/>
</dbReference>
<dbReference type="SUPFAM" id="SSF48678">
    <property type="entry name" value="Moesin tail domain"/>
    <property type="match status" value="1"/>
</dbReference>
<dbReference type="SUPFAM" id="SSF50729">
    <property type="entry name" value="PH domain-like"/>
    <property type="match status" value="1"/>
</dbReference>
<dbReference type="SUPFAM" id="SSF47031">
    <property type="entry name" value="Second domain of FERM"/>
    <property type="match status" value="1"/>
</dbReference>
<dbReference type="SUPFAM" id="SSF54236">
    <property type="entry name" value="Ubiquitin-like"/>
    <property type="match status" value="1"/>
</dbReference>
<dbReference type="PROSITE" id="PS00660">
    <property type="entry name" value="FERM_1"/>
    <property type="match status" value="1"/>
</dbReference>
<dbReference type="PROSITE" id="PS00661">
    <property type="entry name" value="FERM_2"/>
    <property type="match status" value="1"/>
</dbReference>
<dbReference type="PROSITE" id="PS50057">
    <property type="entry name" value="FERM_3"/>
    <property type="match status" value="1"/>
</dbReference>
<protein>
    <recommendedName>
        <fullName>Ezrin</fullName>
    </recommendedName>
    <alternativeName>
        <fullName>Cytovillin</fullName>
    </alternativeName>
    <alternativeName>
        <fullName>Villin-2</fullName>
    </alternativeName>
    <alternativeName>
        <fullName>p81</fullName>
    </alternativeName>
</protein>
<comment type="function">
    <text evidence="1">Probably involved in connections of major cytoskeletal structures to the plasma membrane. In epithelial cells, required for the formation of microvilli and membrane ruffles on the apical pole. Along with PLEKHG6, required for normal macropinocytosis (By similarity).</text>
</comment>
<comment type="activity regulation">
    <text evidence="1">A head-to-tail association, of the N-terminal and C-terminal halves results in a closed conformation (inactive form) which is incapable of actin or membrane-binding.</text>
</comment>
<comment type="subunit">
    <text evidence="2 3 4 5 9 10">Interacts with PODXL and NHERF2. Found in a complex with EZR, PODXL and NHERF2 (PubMed:11457882). Interacts with PALS1. Interacts with MCC, PLEKHG6, SCYL3/PACE1, NHERF1 and TMEM8B. Interacts (when phosphorylated) with FES/FPS. Interacts with dimeric S100P, the interaction may be activating through unmasking of F-actin binding sites. Identified in complexes that contain VIM, EZR, AHNAK, BFSP1, BFSP2, ANK2, PLEC, PRX and spectrin. Detected in a complex composed of at least EZR, AHNAK, PPL and PRX. Interacts with PDPN (via cytoplasmic domain); activates RHOA and promotes epithelial-mesenchymal transition. Interacts with SPN/CD43 cytoplasmic tail, CD44 and ICAM2 (By similarity). Interacts with SLC9A3; interaction targets SLC9A3 to the apical membrane (By similarity). Interacts with SLC9A1; regulates interactions of SLC9A1 with cytoskeletal and promotes stress fiber formation (PubMed:11163215). Interacts with CLIC5; may work together in a complex which also includes RDX and MYO6 to stabilize linkages between the plasma membrane and subjacent actin cytoskeleton at the base of stereocilia (By similarity).</text>
</comment>
<comment type="interaction">
    <interactant intactId="EBI-917242">
        <id>P31977</id>
    </interactant>
    <interactant intactId="EBI-1798965">
        <id>Q63155</id>
        <label>Dcc</label>
    </interactant>
    <organismsDiffer>false</organismsDiffer>
    <experiments>2</experiments>
</comment>
<comment type="subcellular location">
    <subcellularLocation>
        <location evidence="2">Apical cell membrane</location>
        <topology evidence="2">Peripheral membrane protein</topology>
        <orientation evidence="2">Cytoplasmic side</orientation>
    </subcellularLocation>
    <subcellularLocation>
        <location evidence="2">Cell projection</location>
    </subcellularLocation>
    <subcellularLocation>
        <location evidence="2">Cell projection</location>
        <location evidence="2">Microvillus membrane</location>
        <topology evidence="2">Peripheral membrane protein</topology>
        <orientation evidence="2">Cytoplasmic side</orientation>
    </subcellularLocation>
    <subcellularLocation>
        <location evidence="2">Cell projection</location>
        <location evidence="2">Ruffle membrane</location>
        <topology evidence="2">Peripheral membrane protein</topology>
        <orientation evidence="2">Cytoplasmic side</orientation>
    </subcellularLocation>
    <subcellularLocation>
        <location evidence="2">Cytoplasm</location>
        <location evidence="2">Cell cortex</location>
    </subcellularLocation>
    <subcellularLocation>
        <location evidence="2">Cytoplasm</location>
        <location evidence="2">Cytoskeleton</location>
    </subcellularLocation>
    <subcellularLocation>
        <location evidence="3">Cell projection</location>
        <location evidence="3">Microvillus</location>
    </subcellularLocation>
    <text evidence="2 10 11">Localization to the apical membrane of parietal cells depends on the interaction with PALS1. Microvillar peripheral membrane protein (cytoplasmic side) (By similarity). Localizes to cell extensions and peripheral processes of astrocytes. Colocalizes with EZR and NHERF2 at the apical cell membrane of glomerular epithelium cells.</text>
</comment>
<comment type="tissue specificity">
    <text evidence="10 11 12">Glomerular epithelium cell (podocyte). Expressed in cerebrum, cerebellum and hippocampus (at protein level). Expressed in the small intestine, lung, kidney and ovaries.</text>
</comment>
<comment type="developmental stage">
    <text evidence="12">Levels increase in the fetal gut epithelium between day 15 and day 20 of gestation and during the first week after birth.</text>
</comment>
<comment type="domain">
    <text evidence="2">Has three main structural domains: an N-terminal FERM domain, a central alpha-helical domain and a C-terminal actin-binding domain.</text>
</comment>
<comment type="domain">
    <text evidence="2">The FERM domain is organized in a clover-shaped structure that comprises three subdomains identified as F1 (residues 2-82), F2 (residues 96-198), and F3 (residues 204-296). In the active form, the subdomain F3 adopts two mutually exclusive conformational isomers where a row of four phenylalanine side chains (Phe250, Phe255, Phe267 and Phe269) must point in the same direction. In the autoinhibited form, the F3 subdomain interacts with the C-terminal domain (residues 516-586) and stabilizes the structure, selecting only one possible arrangement of phenylalanine side chains. The FERM domain mediates binding to membrane lipids and signaling molecules.</text>
</comment>
<comment type="domain">
    <text evidence="2">The central alpha-helical domain is composed of two alpha helices (residues 326-406 and 417-466) connected by a linker. It protrudes from the FERM domain forming a coiled coil structure where the linker can have either a loop or a helix conformation. The monomer is predicted to form an intra-molecular helix-loop-helix coiled coil structure. Whereas the dimer adopts an elongated dumbbell-shaped configuration where continuous alpha helices from each protomer are organized in a antiparallel coiled coil structure that connect FERM:C-terminal domain swapped complex at each end. The dimer is predicted to link actin filaments parallel to the plasma membrane.</text>
</comment>
<comment type="domain">
    <text evidence="2">The [IL]-x-C-x-x-[DE] motif is a proposed target motif for cysteine S-nitrosylation mediated by the iNOS-S100A8/A9 transnitrosylase complex.</text>
</comment>
<comment type="PTM">
    <text evidence="1">Phosphorylated by tyrosine-protein kinases. Phosphorylation by ROCK2 suppresses the head-to-tail association of the N-terminal and C-terminal halves resulting in an opened conformation which is capable of actin and membrane-binding (By similarity).</text>
</comment>
<comment type="PTM">
    <text evidence="2">S-nitrosylation is induced by interferon-gamma and oxidatively-modified low-densitity lipoprotein (LDL(ox)) possibly implicating the iNOS-S100A8/9 transnitrosylase complex.</text>
</comment>
<name>EZRI_RAT</name>
<gene>
    <name type="primary">Ezr</name>
    <name type="synonym">Vil2</name>
</gene>
<reference key="1">
    <citation type="submission" date="2003-10" db="EMBL/GenBank/DDBJ databases">
        <title>Rattus norvegicus ezrin.</title>
        <authorList>
            <person name="Harita Y."/>
            <person name="Koike H."/>
            <person name="Han G."/>
            <person name="Miyauchi N."/>
            <person name="Karasawa T."/>
            <person name="Suzuki K."/>
            <person name="Shimizu F."/>
            <person name="Kawachi H."/>
        </authorList>
    </citation>
    <scope>NUCLEOTIDE SEQUENCE [MRNA]</scope>
    <source>
        <strain>Wistar</strain>
    </source>
</reference>
<reference key="2">
    <citation type="journal article" date="2004" name="Genome Res.">
        <title>The status, quality, and expansion of the NIH full-length cDNA project: the Mammalian Gene Collection (MGC).</title>
        <authorList>
            <consortium name="The MGC Project Team"/>
        </authorList>
    </citation>
    <scope>NUCLEOTIDE SEQUENCE [LARGE SCALE MRNA]</scope>
    <source>
        <tissue>Lung</tissue>
    </source>
</reference>
<reference key="3">
    <citation type="submission" date="2001-11" db="EMBL/GenBank/DDBJ databases">
        <authorList>
            <person name="Gunn-Moore F.J."/>
            <person name="Tait S."/>
            <person name="Brophy P.J."/>
        </authorList>
    </citation>
    <scope>NUCLEOTIDE SEQUENCE [MRNA] OF 1-455</scope>
    <source>
        <strain>Sprague-Dawley</strain>
    </source>
</reference>
<reference key="4">
    <citation type="journal article" date="1995" name="Biochim. Biophys. Acta">
        <title>Transcriptional regulation of the ezrin gene during rat intestinal development and epithelial differentiation.</title>
        <authorList>
            <person name="Barila D."/>
            <person name="Murgia C."/>
            <person name="Nobili F."/>
            <person name="Perozzi G."/>
        </authorList>
    </citation>
    <scope>NUCLEOTIDE SEQUENCE [MRNA] OF 427-586</scope>
    <scope>TISSUE SPECIFICITY</scope>
    <scope>DEVELOPMENTAL STAGE</scope>
    <source>
        <strain>Wistar</strain>
        <tissue>Intestine</tissue>
    </source>
</reference>
<reference key="5">
    <citation type="submission" date="2007-07" db="UniProtKB">
        <authorList>
            <person name="Lubec G."/>
            <person name="Chen W.-Q."/>
            <person name="Kang S.U."/>
        </authorList>
    </citation>
    <scope>PROTEIN SEQUENCE OF 28-35; 101-107; 263-273; 372-379; 428-435 AND 530-542</scope>
    <scope>IDENTIFICATION BY MASS SPECTROMETRY</scope>
    <source>
        <strain>Sprague-Dawley</strain>
        <tissue>Brain</tissue>
        <tissue>Hippocampus</tissue>
    </source>
</reference>
<reference key="6">
    <citation type="journal article" date="2001" name="J. Clin. Invest.">
        <title>Loss of glomerular foot processes is associated with uncoupling of podocalyxin from the actin cytoskeleton.</title>
        <authorList>
            <person name="Takeda T."/>
            <person name="McQuistan T."/>
            <person name="Orlando R.A."/>
            <person name="Farquhar M.G."/>
        </authorList>
    </citation>
    <scope>INTERACTION WITH PODXL AND NHERF2</scope>
    <scope>SUBCELLULAR LOCATION</scope>
    <scope>TISSUE SPECIFICITY</scope>
</reference>
<reference key="7">
    <citation type="journal article" date="2005" name="Mol. Cell. Neurosci.">
        <title>Characterization of the NF2 protein merlin and the ERM protein ezrin in human, rat, and mouse central nervous system.</title>
        <authorList>
            <person name="Groenholm M."/>
            <person name="Teesalu T."/>
            <person name="Tyynelaa J."/>
            <person name="Piltti K."/>
            <person name="Boehling T."/>
            <person name="Wartiovaara K."/>
            <person name="Vaheri A."/>
            <person name="Carpen O."/>
        </authorList>
    </citation>
    <scope>TISSUE SPECIFICITY</scope>
    <scope>SUBCELLULAR LOCATION</scope>
</reference>
<reference key="8">
    <citation type="journal article" date="2012" name="Nat. Commun.">
        <title>Quantitative maps of protein phosphorylation sites across 14 different rat organs and tissues.</title>
        <authorList>
            <person name="Lundby A."/>
            <person name="Secher A."/>
            <person name="Lage K."/>
            <person name="Nordsborg N.B."/>
            <person name="Dmytriyev A."/>
            <person name="Lundby C."/>
            <person name="Olsen J.V."/>
        </authorList>
    </citation>
    <scope>PHOSPHORYLATION [LARGE SCALE ANALYSIS] AT SER-535</scope>
    <scope>IDENTIFICATION BY MASS SPECTROMETRY [LARGE SCALE ANALYSIS]</scope>
</reference>
<reference key="9">
    <citation type="journal article" date="2000" name="Mol. Cell">
        <title>Direct binding of the Na--H exchanger NHE1 to ERM proteins regulates the cortical cytoskeleton and cell shape independently of H(+) translocation.</title>
        <authorList>
            <person name="Denker S.P."/>
            <person name="Huang D.C."/>
            <person name="Orlowski J."/>
            <person name="Furthmayr H."/>
            <person name="Barber D.L."/>
        </authorList>
    </citation>
    <scope>INTERACTION WITH SLC9A1</scope>
</reference>
<evidence type="ECO:0000250" key="1"/>
<evidence type="ECO:0000250" key="2">
    <source>
        <dbReference type="UniProtKB" id="P15311"/>
    </source>
</evidence>
<evidence type="ECO:0000250" key="3">
    <source>
        <dbReference type="UniProtKB" id="P26040"/>
    </source>
</evidence>
<evidence type="ECO:0000250" key="4">
    <source>
        <dbReference type="UniProtKB" id="P31976"/>
    </source>
</evidence>
<evidence type="ECO:0000250" key="5">
    <source>
        <dbReference type="UniProtKB" id="Q8HZQ5"/>
    </source>
</evidence>
<evidence type="ECO:0000255" key="6"/>
<evidence type="ECO:0000255" key="7">
    <source>
        <dbReference type="PROSITE-ProRule" id="PRU00084"/>
    </source>
</evidence>
<evidence type="ECO:0000256" key="8">
    <source>
        <dbReference type="SAM" id="MobiDB-lite"/>
    </source>
</evidence>
<evidence type="ECO:0000269" key="9">
    <source>
    </source>
</evidence>
<evidence type="ECO:0000269" key="10">
    <source>
    </source>
</evidence>
<evidence type="ECO:0000269" key="11">
    <source>
    </source>
</evidence>
<evidence type="ECO:0000269" key="12">
    <source>
    </source>
</evidence>
<evidence type="ECO:0000305" key="13"/>
<evidence type="ECO:0007744" key="14">
    <source>
    </source>
</evidence>